<evidence type="ECO:0000250" key="1"/>
<evidence type="ECO:0000255" key="2"/>
<evidence type="ECO:0000305" key="3"/>
<sequence>MWLQGLLLLGTVACSISAPARSPSPGTQPWEHVNAIQEARRLLNLSRDTAAEMNKTVEVVSEMFDLQEPSCLQTRLELYKQGLQGSLTKLKGPLTMMASHYKQHCPPTPETSCATQMITFQSFKENLKDFLLVIPFDCWEPVQE</sequence>
<accession>Q0MUT8</accession>
<gene>
    <name type="primary">CSF2</name>
</gene>
<keyword id="KW-0202">Cytokine</keyword>
<keyword id="KW-1015">Disulfide bond</keyword>
<keyword id="KW-0325">Glycoprotein</keyword>
<keyword id="KW-0339">Growth factor</keyword>
<keyword id="KW-0964">Secreted</keyword>
<keyword id="KW-0732">Signal</keyword>
<protein>
    <recommendedName>
        <fullName>Granulocyte-macrophage colony-stimulating factor</fullName>
        <shortName>GM-CSF</shortName>
    </recommendedName>
    <alternativeName>
        <fullName>Colony-stimulating factor</fullName>
        <shortName>CSF</shortName>
    </alternativeName>
</protein>
<proteinExistence type="evidence at transcript level"/>
<feature type="signal peptide" evidence="1">
    <location>
        <begin position="1"/>
        <end position="17"/>
    </location>
</feature>
<feature type="chain" id="PRO_0000251736" description="Granulocyte-macrophage colony-stimulating factor">
    <location>
        <begin position="18"/>
        <end position="144"/>
    </location>
</feature>
<feature type="glycosylation site" description="O-linked (GalNAc...) serine" evidence="1">
    <location>
        <position position="24"/>
    </location>
</feature>
<feature type="glycosylation site" description="O-linked (GalNAc...) threonine" evidence="1">
    <location>
        <position position="27"/>
    </location>
</feature>
<feature type="glycosylation site" description="N-linked (GlcNAc...) asparagine" evidence="2">
    <location>
        <position position="44"/>
    </location>
</feature>
<feature type="glycosylation site" description="N-linked (GlcNAc...) asparagine" evidence="2">
    <location>
        <position position="54"/>
    </location>
</feature>
<feature type="disulfide bond" evidence="1">
    <location>
        <begin position="71"/>
        <end position="113"/>
    </location>
</feature>
<feature type="disulfide bond" evidence="1">
    <location>
        <begin position="105"/>
        <end position="138"/>
    </location>
</feature>
<dbReference type="EMBL" id="DQ845250">
    <property type="protein sequence ID" value="ABH10080.1"/>
    <property type="molecule type" value="mRNA"/>
</dbReference>
<dbReference type="SMR" id="Q0MUT8"/>
<dbReference type="GlyCosmos" id="Q0MUT8">
    <property type="glycosylation" value="4 sites, No reported glycans"/>
</dbReference>
<dbReference type="GO" id="GO:0005615">
    <property type="term" value="C:extracellular space"/>
    <property type="evidence" value="ECO:0000250"/>
    <property type="project" value="UniProtKB"/>
</dbReference>
<dbReference type="GO" id="GO:0005125">
    <property type="term" value="F:cytokine activity"/>
    <property type="evidence" value="ECO:0000250"/>
    <property type="project" value="UniProtKB"/>
</dbReference>
<dbReference type="GO" id="GO:0005129">
    <property type="term" value="F:granulocyte macrophage colony-stimulating factor receptor binding"/>
    <property type="evidence" value="ECO:0007669"/>
    <property type="project" value="InterPro"/>
</dbReference>
<dbReference type="GO" id="GO:0008083">
    <property type="term" value="F:growth factor activity"/>
    <property type="evidence" value="ECO:0007669"/>
    <property type="project" value="UniProtKB-KW"/>
</dbReference>
<dbReference type="GO" id="GO:0006955">
    <property type="term" value="P:immune response"/>
    <property type="evidence" value="ECO:0007669"/>
    <property type="project" value="InterPro"/>
</dbReference>
<dbReference type="GO" id="GO:0030099">
    <property type="term" value="P:myeloid cell differentiation"/>
    <property type="evidence" value="ECO:0007669"/>
    <property type="project" value="TreeGrafter"/>
</dbReference>
<dbReference type="CDD" id="cd00040">
    <property type="entry name" value="CSF2"/>
    <property type="match status" value="1"/>
</dbReference>
<dbReference type="FunFam" id="1.20.1250.10:FF:000028">
    <property type="entry name" value="Granulocyte-macrophage colony-stimulating factor"/>
    <property type="match status" value="1"/>
</dbReference>
<dbReference type="Gene3D" id="1.20.1250.10">
    <property type="match status" value="1"/>
</dbReference>
<dbReference type="InterPro" id="IPR009079">
    <property type="entry name" value="4_helix_cytokine-like_core"/>
</dbReference>
<dbReference type="InterPro" id="IPR000773">
    <property type="entry name" value="GM_colony-stim-fac"/>
</dbReference>
<dbReference type="PANTHER" id="PTHR10059:SF0">
    <property type="entry name" value="GRANULOCYTE-MACROPHAGE COLONY-STIMULATING FACTOR"/>
    <property type="match status" value="1"/>
</dbReference>
<dbReference type="PANTHER" id="PTHR10059">
    <property type="entry name" value="GRANULOCYTE-MACROPHAGE COLONY-STIMULATING FACTOR GM-CSF"/>
    <property type="match status" value="1"/>
</dbReference>
<dbReference type="Pfam" id="PF01109">
    <property type="entry name" value="GM_CSF"/>
    <property type="match status" value="1"/>
</dbReference>
<dbReference type="PRINTS" id="PR00693">
    <property type="entry name" value="GMCSFACTOR"/>
</dbReference>
<dbReference type="SMART" id="SM00040">
    <property type="entry name" value="CSF2"/>
    <property type="match status" value="1"/>
</dbReference>
<dbReference type="SUPFAM" id="SSF47266">
    <property type="entry name" value="4-helical cytokines"/>
    <property type="match status" value="1"/>
</dbReference>
<dbReference type="PROSITE" id="PS00702">
    <property type="entry name" value="GM_CSF"/>
    <property type="match status" value="1"/>
</dbReference>
<name>CSF2_CHLAE</name>
<reference key="1">
    <citation type="submission" date="2006-07" db="EMBL/GenBank/DDBJ databases">
        <title>Sequence of African green monkey (Chlorocebus aethiops) GM-CSF gene.</title>
        <authorList>
            <person name="Siegismund C.S."/>
            <person name="Hohn O."/>
            <person name="Kurth R."/>
            <person name="Norley S."/>
        </authorList>
    </citation>
    <scope>NUCLEOTIDE SEQUENCE [MRNA]</scope>
</reference>
<comment type="function">
    <text evidence="1">Cytokine that stimulates the growth and differentiation of hematopoietic precursor cells from various lineages, including granulocytes, macrophages, eosinophils and erythrocytes.</text>
</comment>
<comment type="subunit">
    <text evidence="1">Monomer. The signaling GM-CSF receptor complex is a dodecamer of two head-to-head hexamers of two alpha, two beta, and two ligand subunits (By similarity).</text>
</comment>
<comment type="subcellular location">
    <subcellularLocation>
        <location>Secreted</location>
    </subcellularLocation>
</comment>
<comment type="similarity">
    <text evidence="3">Belongs to the GM-CSF family.</text>
</comment>
<organism>
    <name type="scientific">Chlorocebus aethiops</name>
    <name type="common">Green monkey</name>
    <name type="synonym">Cercopithecus aethiops</name>
    <dbReference type="NCBI Taxonomy" id="9534"/>
    <lineage>
        <taxon>Eukaryota</taxon>
        <taxon>Metazoa</taxon>
        <taxon>Chordata</taxon>
        <taxon>Craniata</taxon>
        <taxon>Vertebrata</taxon>
        <taxon>Euteleostomi</taxon>
        <taxon>Mammalia</taxon>
        <taxon>Eutheria</taxon>
        <taxon>Euarchontoglires</taxon>
        <taxon>Primates</taxon>
        <taxon>Haplorrhini</taxon>
        <taxon>Catarrhini</taxon>
        <taxon>Cercopithecidae</taxon>
        <taxon>Cercopithecinae</taxon>
        <taxon>Chlorocebus</taxon>
    </lineage>
</organism>